<reference key="1">
    <citation type="journal article" date="2009" name="Genome Res.">
        <title>Comparative genomic analyses of the human fungal pathogens Coccidioides and their relatives.</title>
        <authorList>
            <person name="Sharpton T.J."/>
            <person name="Stajich J.E."/>
            <person name="Rounsley S.D."/>
            <person name="Gardner M.J."/>
            <person name="Wortman J.R."/>
            <person name="Jordar V.S."/>
            <person name="Maiti R."/>
            <person name="Kodira C.D."/>
            <person name="Neafsey D.E."/>
            <person name="Zeng Q."/>
            <person name="Hung C.-Y."/>
            <person name="McMahan C."/>
            <person name="Muszewska A."/>
            <person name="Grynberg M."/>
            <person name="Mandel M.A."/>
            <person name="Kellner E.M."/>
            <person name="Barker B.M."/>
            <person name="Galgiani J.N."/>
            <person name="Orbach M.J."/>
            <person name="Kirkland T.N."/>
            <person name="Cole G.T."/>
            <person name="Henn M.R."/>
            <person name="Birren B.W."/>
            <person name="Taylor J.W."/>
        </authorList>
    </citation>
    <scope>NUCLEOTIDE SEQUENCE [LARGE SCALE GENOMIC DNA]</scope>
    <source>
        <strain>NAm1 / WU24</strain>
    </source>
</reference>
<sequence length="657" mass="73294">MRGCLQSVKWLTSALRPSQSLASSTRYPRRLLSTSAPRNAQVRKPASEVEQRIAAIPIERFRNFCIVAHVDHGKSTLSDRLLELTGTIEAGANKQVLDKLDVERERGITVKAQTCSMLYNHQGEDYLLHLVDTPGHVDFRAEVSRSYASCGGALLLVDASQGIQAQTVANFYLAFAEGLKLVPVINKVDLPSADPQRALDQMKNTFELDPESAVLVSAKTGLNVSQLLPTVIEQIPAPVGDRTKPLRMLLVDSWYSTYKGVILLVRLFDGEIRVGDQVVSFATGLKYTVGEVGIMYPWQTAQSVLRAGQVGYIYFNPAMKRSQEAKVGDTYTKVGSEKLVQPLPGFEEPKAMVFVAAYPVDASDFPHLEDSINQLILNDRSVTLQKESSEALGAGFRLGFLGTLHCSVFEDRLRQEHGASIIITPPTVPFKVIWKDGKEEIITNPALFPEEDTLRAKVTELQEPFVLATLTFPEEYLGRVIELCESNRGEQKSLEFFTSTQVILKYELPLAQLVDDFFGKLKGSTKGYASLDYEESGWRRSNISKLQLLVNKVPVDAVSRVVHSSQVQRLGRLWVSKFKEHVDRQMFEVVIQAAAGRNVVARESIKPFRKDVLQKLHAADVTRRKKLLEKQKEGRKKLKAVGNVVIEHKAFQAFLAK</sequence>
<accession>A6RGX9</accession>
<proteinExistence type="inferred from homology"/>
<comment type="function">
    <text evidence="1">Promotes mitochondrial protein synthesis. May act as a fidelity factor of the translation reaction, by catalyzing a one-codon backward translocation of tRNAs on improperly translocated ribosomes. Binds to mitochondrial ribosomes in a GTP-dependent manner.</text>
</comment>
<comment type="catalytic activity">
    <reaction evidence="1">
        <text>GTP + H2O = GDP + phosphate + H(+)</text>
        <dbReference type="Rhea" id="RHEA:19669"/>
        <dbReference type="ChEBI" id="CHEBI:15377"/>
        <dbReference type="ChEBI" id="CHEBI:15378"/>
        <dbReference type="ChEBI" id="CHEBI:37565"/>
        <dbReference type="ChEBI" id="CHEBI:43474"/>
        <dbReference type="ChEBI" id="CHEBI:58189"/>
    </reaction>
</comment>
<comment type="subcellular location">
    <subcellularLocation>
        <location evidence="1">Mitochondrion inner membrane</location>
        <topology evidence="1">Peripheral membrane protein</topology>
        <orientation evidence="1">Matrix side</orientation>
    </subcellularLocation>
</comment>
<comment type="similarity">
    <text evidence="2">Belongs to the TRAFAC class translation factor GTPase superfamily. Classic translation factor GTPase family. LepA subfamily.</text>
</comment>
<name>GUF1_AJECN</name>
<organism>
    <name type="scientific">Ajellomyces capsulatus (strain NAm1 / WU24)</name>
    <name type="common">Darling's disease fungus</name>
    <name type="synonym">Histoplasma capsulatum</name>
    <dbReference type="NCBI Taxonomy" id="2059318"/>
    <lineage>
        <taxon>Eukaryota</taxon>
        <taxon>Fungi</taxon>
        <taxon>Dikarya</taxon>
        <taxon>Ascomycota</taxon>
        <taxon>Pezizomycotina</taxon>
        <taxon>Eurotiomycetes</taxon>
        <taxon>Eurotiomycetidae</taxon>
        <taxon>Onygenales</taxon>
        <taxon>Ajellomycetaceae</taxon>
        <taxon>Histoplasma</taxon>
    </lineage>
</organism>
<keyword id="KW-0342">GTP-binding</keyword>
<keyword id="KW-0378">Hydrolase</keyword>
<keyword id="KW-0472">Membrane</keyword>
<keyword id="KW-0496">Mitochondrion</keyword>
<keyword id="KW-0999">Mitochondrion inner membrane</keyword>
<keyword id="KW-0547">Nucleotide-binding</keyword>
<keyword id="KW-0648">Protein biosynthesis</keyword>
<keyword id="KW-1185">Reference proteome</keyword>
<keyword id="KW-0809">Transit peptide</keyword>
<evidence type="ECO:0000255" key="1">
    <source>
        <dbReference type="HAMAP-Rule" id="MF_03137"/>
    </source>
</evidence>
<evidence type="ECO:0000305" key="2"/>
<feature type="transit peptide" description="Mitochondrion" evidence="1">
    <location>
        <begin position="1"/>
        <end position="39"/>
    </location>
</feature>
<feature type="chain" id="PRO_0000402868" description="Translation factor GUF1, mitochondrial">
    <location>
        <begin position="40"/>
        <end position="657"/>
    </location>
</feature>
<feature type="domain" description="tr-type G">
    <location>
        <begin position="59"/>
        <end position="239"/>
    </location>
</feature>
<feature type="binding site" evidence="1">
    <location>
        <begin position="109"/>
        <end position="116"/>
    </location>
    <ligand>
        <name>GTP</name>
        <dbReference type="ChEBI" id="CHEBI:37565"/>
    </ligand>
</feature>
<feature type="binding site" evidence="1">
    <location>
        <begin position="173"/>
        <end position="177"/>
    </location>
    <ligand>
        <name>GTP</name>
        <dbReference type="ChEBI" id="CHEBI:37565"/>
    </ligand>
</feature>
<feature type="binding site" evidence="1">
    <location>
        <begin position="227"/>
        <end position="230"/>
    </location>
    <ligand>
        <name>GTP</name>
        <dbReference type="ChEBI" id="CHEBI:37565"/>
    </ligand>
</feature>
<protein>
    <recommendedName>
        <fullName evidence="1">Translation factor GUF1, mitochondrial</fullName>
        <ecNumber>3.6.5.-</ecNumber>
    </recommendedName>
    <alternativeName>
        <fullName evidence="1">Elongation factor 4 homolog</fullName>
        <shortName evidence="1">EF-4</shortName>
    </alternativeName>
    <alternativeName>
        <fullName evidence="1">GTPase GUF1</fullName>
    </alternativeName>
    <alternativeName>
        <fullName evidence="1">Ribosomal back-translocase</fullName>
    </alternativeName>
</protein>
<dbReference type="EC" id="3.6.5.-"/>
<dbReference type="EMBL" id="CH476667">
    <property type="protein sequence ID" value="EDN05246.1"/>
    <property type="molecule type" value="Genomic_DNA"/>
</dbReference>
<dbReference type="SMR" id="A6RGX9"/>
<dbReference type="STRING" id="339724.A6RGX9"/>
<dbReference type="KEGG" id="aje:HCAG_08896"/>
<dbReference type="HOGENOM" id="CLU_009995_3_1_1"/>
<dbReference type="OrthoDB" id="3487at299071"/>
<dbReference type="Proteomes" id="UP000009297">
    <property type="component" value="Unassembled WGS sequence"/>
</dbReference>
<dbReference type="GO" id="GO:0005743">
    <property type="term" value="C:mitochondrial inner membrane"/>
    <property type="evidence" value="ECO:0007669"/>
    <property type="project" value="UniProtKB-SubCell"/>
</dbReference>
<dbReference type="GO" id="GO:0005759">
    <property type="term" value="C:mitochondrial matrix"/>
    <property type="evidence" value="ECO:0007669"/>
    <property type="project" value="UniProtKB-UniRule"/>
</dbReference>
<dbReference type="GO" id="GO:0005525">
    <property type="term" value="F:GTP binding"/>
    <property type="evidence" value="ECO:0007669"/>
    <property type="project" value="UniProtKB-UniRule"/>
</dbReference>
<dbReference type="GO" id="GO:0003924">
    <property type="term" value="F:GTPase activity"/>
    <property type="evidence" value="ECO:0007669"/>
    <property type="project" value="UniProtKB-UniRule"/>
</dbReference>
<dbReference type="GO" id="GO:0097177">
    <property type="term" value="F:mitochondrial ribosome binding"/>
    <property type="evidence" value="ECO:0007669"/>
    <property type="project" value="TreeGrafter"/>
</dbReference>
<dbReference type="GO" id="GO:0045727">
    <property type="term" value="P:positive regulation of translation"/>
    <property type="evidence" value="ECO:0007669"/>
    <property type="project" value="UniProtKB-UniRule"/>
</dbReference>
<dbReference type="GO" id="GO:0006412">
    <property type="term" value="P:translation"/>
    <property type="evidence" value="ECO:0007669"/>
    <property type="project" value="UniProtKB-KW"/>
</dbReference>
<dbReference type="CDD" id="cd03699">
    <property type="entry name" value="EF4_II"/>
    <property type="match status" value="1"/>
</dbReference>
<dbReference type="CDD" id="cd16260">
    <property type="entry name" value="EF4_III"/>
    <property type="match status" value="1"/>
</dbReference>
<dbReference type="CDD" id="cd01890">
    <property type="entry name" value="LepA"/>
    <property type="match status" value="1"/>
</dbReference>
<dbReference type="CDD" id="cd03709">
    <property type="entry name" value="lepA_C"/>
    <property type="match status" value="1"/>
</dbReference>
<dbReference type="FunFam" id="3.40.50.300:FF:000078">
    <property type="entry name" value="Elongation factor 4"/>
    <property type="match status" value="1"/>
</dbReference>
<dbReference type="FunFam" id="2.40.30.10:FF:000015">
    <property type="entry name" value="Translation factor GUF1, mitochondrial"/>
    <property type="match status" value="1"/>
</dbReference>
<dbReference type="FunFam" id="3.30.70.240:FF:000007">
    <property type="entry name" value="Translation factor GUF1, mitochondrial"/>
    <property type="match status" value="1"/>
</dbReference>
<dbReference type="FunFam" id="3.30.70.2570:FF:000001">
    <property type="entry name" value="Translation factor GUF1, mitochondrial"/>
    <property type="match status" value="1"/>
</dbReference>
<dbReference type="FunFam" id="3.30.70.870:FF:000004">
    <property type="entry name" value="Translation factor GUF1, mitochondrial"/>
    <property type="match status" value="1"/>
</dbReference>
<dbReference type="Gene3D" id="3.30.70.240">
    <property type="match status" value="1"/>
</dbReference>
<dbReference type="Gene3D" id="3.30.70.2570">
    <property type="entry name" value="Elongation factor 4, C-terminal domain"/>
    <property type="match status" value="1"/>
</dbReference>
<dbReference type="Gene3D" id="3.30.70.870">
    <property type="entry name" value="Elongation Factor G (Translational Gtpase), domain 3"/>
    <property type="match status" value="1"/>
</dbReference>
<dbReference type="Gene3D" id="3.40.50.300">
    <property type="entry name" value="P-loop containing nucleotide triphosphate hydrolases"/>
    <property type="match status" value="1"/>
</dbReference>
<dbReference type="Gene3D" id="2.40.30.10">
    <property type="entry name" value="Translation factors"/>
    <property type="match status" value="1"/>
</dbReference>
<dbReference type="HAMAP" id="MF_00071">
    <property type="entry name" value="LepA"/>
    <property type="match status" value="1"/>
</dbReference>
<dbReference type="InterPro" id="IPR006297">
    <property type="entry name" value="EF-4"/>
</dbReference>
<dbReference type="InterPro" id="IPR035647">
    <property type="entry name" value="EFG_III/V"/>
</dbReference>
<dbReference type="InterPro" id="IPR000640">
    <property type="entry name" value="EFG_V-like"/>
</dbReference>
<dbReference type="InterPro" id="IPR031157">
    <property type="entry name" value="G_TR_CS"/>
</dbReference>
<dbReference type="InterPro" id="IPR038363">
    <property type="entry name" value="LepA_C_sf"/>
</dbReference>
<dbReference type="InterPro" id="IPR013842">
    <property type="entry name" value="LepA_CTD"/>
</dbReference>
<dbReference type="InterPro" id="IPR035654">
    <property type="entry name" value="LepA_IV"/>
</dbReference>
<dbReference type="InterPro" id="IPR027417">
    <property type="entry name" value="P-loop_NTPase"/>
</dbReference>
<dbReference type="InterPro" id="IPR005225">
    <property type="entry name" value="Small_GTP-bd"/>
</dbReference>
<dbReference type="InterPro" id="IPR000795">
    <property type="entry name" value="T_Tr_GTP-bd_dom"/>
</dbReference>
<dbReference type="NCBIfam" id="TIGR01393">
    <property type="entry name" value="lepA"/>
    <property type="match status" value="1"/>
</dbReference>
<dbReference type="NCBIfam" id="TIGR00231">
    <property type="entry name" value="small_GTP"/>
    <property type="match status" value="1"/>
</dbReference>
<dbReference type="PANTHER" id="PTHR43512:SF7">
    <property type="entry name" value="TRANSLATION FACTOR GUF1, MITOCHONDRIAL"/>
    <property type="match status" value="1"/>
</dbReference>
<dbReference type="PANTHER" id="PTHR43512">
    <property type="entry name" value="TRANSLATION FACTOR GUF1-RELATED"/>
    <property type="match status" value="1"/>
</dbReference>
<dbReference type="Pfam" id="PF00679">
    <property type="entry name" value="EFG_C"/>
    <property type="match status" value="1"/>
</dbReference>
<dbReference type="Pfam" id="PF00009">
    <property type="entry name" value="GTP_EFTU"/>
    <property type="match status" value="1"/>
</dbReference>
<dbReference type="Pfam" id="PF06421">
    <property type="entry name" value="LepA_C"/>
    <property type="match status" value="1"/>
</dbReference>
<dbReference type="PRINTS" id="PR00315">
    <property type="entry name" value="ELONGATNFCT"/>
</dbReference>
<dbReference type="SUPFAM" id="SSF54980">
    <property type="entry name" value="EF-G C-terminal domain-like"/>
    <property type="match status" value="2"/>
</dbReference>
<dbReference type="SUPFAM" id="SSF52540">
    <property type="entry name" value="P-loop containing nucleoside triphosphate hydrolases"/>
    <property type="match status" value="1"/>
</dbReference>
<dbReference type="PROSITE" id="PS00301">
    <property type="entry name" value="G_TR_1"/>
    <property type="match status" value="1"/>
</dbReference>
<dbReference type="PROSITE" id="PS51722">
    <property type="entry name" value="G_TR_2"/>
    <property type="match status" value="1"/>
</dbReference>
<gene>
    <name evidence="1" type="primary">GUF1</name>
    <name type="ORF">HCAG_08896</name>
</gene>